<reference key="1">
    <citation type="journal article" date="2007" name="PLoS ONE">
        <title>Genome sequencing shows that European isolates of Francisella tularensis subspecies tularensis are almost identical to US laboratory strain Schu S4.</title>
        <authorList>
            <person name="Chaudhuri R.R."/>
            <person name="Ren C.-P."/>
            <person name="Desmond L."/>
            <person name="Vincent G.A."/>
            <person name="Silman N.J."/>
            <person name="Brehm J.K."/>
            <person name="Elmore M.J."/>
            <person name="Hudson M.J."/>
            <person name="Forsman M."/>
            <person name="Isherwood K.E."/>
            <person name="Gurycova D."/>
            <person name="Minton N.P."/>
            <person name="Titball R.W."/>
            <person name="Pallen M.J."/>
            <person name="Vipond R."/>
        </authorList>
    </citation>
    <scope>NUCLEOTIDE SEQUENCE [LARGE SCALE GENOMIC DNA]</scope>
    <source>
        <strain>FSC 198</strain>
    </source>
</reference>
<protein>
    <recommendedName>
        <fullName evidence="1">Small ribosomal subunit protein bS16</fullName>
    </recommendedName>
    <alternativeName>
        <fullName evidence="2">30S ribosomal protein S16</fullName>
    </alternativeName>
</protein>
<accession>Q14JS9</accession>
<name>RS16_FRAT1</name>
<keyword id="KW-0687">Ribonucleoprotein</keyword>
<keyword id="KW-0689">Ribosomal protein</keyword>
<proteinExistence type="inferred from homology"/>
<gene>
    <name evidence="1" type="primary">rpsP</name>
    <name type="ordered locus">FTF0150</name>
</gene>
<evidence type="ECO:0000255" key="1">
    <source>
        <dbReference type="HAMAP-Rule" id="MF_00385"/>
    </source>
</evidence>
<evidence type="ECO:0000305" key="2"/>
<dbReference type="EMBL" id="AM286280">
    <property type="protein sequence ID" value="CAL08166.1"/>
    <property type="molecule type" value="Genomic_DNA"/>
</dbReference>
<dbReference type="RefSeq" id="WP_003023081.1">
    <property type="nucleotide sequence ID" value="NC_008245.1"/>
</dbReference>
<dbReference type="SMR" id="Q14JS9"/>
<dbReference type="KEGG" id="ftf:FTF0150"/>
<dbReference type="HOGENOM" id="CLU_100590_5_1_6"/>
<dbReference type="GO" id="GO:0005737">
    <property type="term" value="C:cytoplasm"/>
    <property type="evidence" value="ECO:0007669"/>
    <property type="project" value="UniProtKB-ARBA"/>
</dbReference>
<dbReference type="GO" id="GO:0015935">
    <property type="term" value="C:small ribosomal subunit"/>
    <property type="evidence" value="ECO:0007669"/>
    <property type="project" value="TreeGrafter"/>
</dbReference>
<dbReference type="GO" id="GO:0003735">
    <property type="term" value="F:structural constituent of ribosome"/>
    <property type="evidence" value="ECO:0007669"/>
    <property type="project" value="InterPro"/>
</dbReference>
<dbReference type="GO" id="GO:0006412">
    <property type="term" value="P:translation"/>
    <property type="evidence" value="ECO:0007669"/>
    <property type="project" value="UniProtKB-UniRule"/>
</dbReference>
<dbReference type="Gene3D" id="3.30.1320.10">
    <property type="match status" value="1"/>
</dbReference>
<dbReference type="HAMAP" id="MF_00385">
    <property type="entry name" value="Ribosomal_bS16"/>
    <property type="match status" value="1"/>
</dbReference>
<dbReference type="InterPro" id="IPR000307">
    <property type="entry name" value="Ribosomal_bS16"/>
</dbReference>
<dbReference type="InterPro" id="IPR023803">
    <property type="entry name" value="Ribosomal_bS16_dom_sf"/>
</dbReference>
<dbReference type="NCBIfam" id="TIGR00002">
    <property type="entry name" value="S16"/>
    <property type="match status" value="1"/>
</dbReference>
<dbReference type="PANTHER" id="PTHR12919">
    <property type="entry name" value="30S RIBOSOMAL PROTEIN S16"/>
    <property type="match status" value="1"/>
</dbReference>
<dbReference type="PANTHER" id="PTHR12919:SF20">
    <property type="entry name" value="SMALL RIBOSOMAL SUBUNIT PROTEIN BS16M"/>
    <property type="match status" value="1"/>
</dbReference>
<dbReference type="Pfam" id="PF00886">
    <property type="entry name" value="Ribosomal_S16"/>
    <property type="match status" value="1"/>
</dbReference>
<dbReference type="SUPFAM" id="SSF54565">
    <property type="entry name" value="Ribosomal protein S16"/>
    <property type="match status" value="1"/>
</dbReference>
<comment type="similarity">
    <text evidence="1">Belongs to the bacterial ribosomal protein bS16 family.</text>
</comment>
<feature type="chain" id="PRO_1000049257" description="Small ribosomal subunit protein bS16">
    <location>
        <begin position="1"/>
        <end position="82"/>
    </location>
</feature>
<organism>
    <name type="scientific">Francisella tularensis subsp. tularensis (strain FSC 198)</name>
    <dbReference type="NCBI Taxonomy" id="393115"/>
    <lineage>
        <taxon>Bacteria</taxon>
        <taxon>Pseudomonadati</taxon>
        <taxon>Pseudomonadota</taxon>
        <taxon>Gammaproteobacteria</taxon>
        <taxon>Thiotrichales</taxon>
        <taxon>Francisellaceae</taxon>
        <taxon>Francisella</taxon>
    </lineage>
</organism>
<sequence length="82" mass="9082">MVVIRMARGGAKKRPFYRIVVADKRSPRDGRFIEKLGFFNPLAKGGEERLKLDVAKAEAWLAKGAQPSDRVASLIKEAKKAA</sequence>